<organism>
    <name type="scientific">Lupinus angustifolius</name>
    <name type="common">Narrow-leaved blue lupine</name>
    <dbReference type="NCBI Taxonomy" id="3871"/>
    <lineage>
        <taxon>Eukaryota</taxon>
        <taxon>Viridiplantae</taxon>
        <taxon>Streptophyta</taxon>
        <taxon>Embryophyta</taxon>
        <taxon>Tracheophyta</taxon>
        <taxon>Spermatophyta</taxon>
        <taxon>Magnoliopsida</taxon>
        <taxon>eudicotyledons</taxon>
        <taxon>Gunneridae</taxon>
        <taxon>Pentapetalae</taxon>
        <taxon>rosids</taxon>
        <taxon>fabids</taxon>
        <taxon>Fabales</taxon>
        <taxon>Fabaceae</taxon>
        <taxon>Papilionoideae</taxon>
        <taxon>50 kb inversion clade</taxon>
        <taxon>genistoids sensu lato</taxon>
        <taxon>core genistoids</taxon>
        <taxon>Genisteae</taxon>
        <taxon>Lupinus</taxon>
    </lineage>
</organism>
<evidence type="ECO:0000250" key="1">
    <source>
        <dbReference type="UniProtKB" id="P04347"/>
    </source>
</evidence>
<evidence type="ECO:0000255" key="2"/>
<evidence type="ECO:0000255" key="3">
    <source>
        <dbReference type="PROSITE-ProRule" id="PRU00498"/>
    </source>
</evidence>
<evidence type="ECO:0000256" key="4">
    <source>
        <dbReference type="SAM" id="MobiDB-lite"/>
    </source>
</evidence>
<evidence type="ECO:0000269" key="5">
    <source>
    </source>
</evidence>
<evidence type="ECO:0000269" key="6">
    <source>
    </source>
</evidence>
<evidence type="ECO:0000303" key="7">
    <source>
    </source>
</evidence>
<evidence type="ECO:0000303" key="8">
    <source>
    </source>
</evidence>
<evidence type="ECO:0000305" key="9"/>
<evidence type="ECO:0000305" key="10">
    <source>
    </source>
</evidence>
<evidence type="ECO:0000305" key="11">
    <source>
    </source>
</evidence>
<evidence type="ECO:0000312" key="12">
    <source>
        <dbReference type="EMBL" id="OIW11262.1"/>
    </source>
</evidence>
<sequence>MANKLLALSLFLLFSGCFASTFRQQPQQNECQFQRLNALEPDNSVKSEAGTIETWNPNNDQLRCAGVALSRCTIQRNGLRRPFYTNAPQEIYIQQGRGIFGLIFPGCRETYEEPQEQEQGQGPRPQDRHQKVEHFREGDIIAVPTGVPFWMYNNEQTPVIAITLIDTTNLDNQLDQIPRRFYLSGNQEQEFLQYQQKEGGQGQQQEGGNEGGNVLSGFNDEFLEEAFSVDREIVRNIKGKNDDREGSIVEVKEGLKVISPPTLRPRQGREEEEEEEEEEEERRGDRRRHRPHHHEEEEEEEEWSHQVRRVRRPHHHREDRNGLEETLCTLKLRHNIGQSTSPDAYNPQAGRLKTLTSLDFPILRWLGLAAEHGSIYKNAMFVPYYNVNANSILYVLNGSAWFQVVDCSGNAVFNGELNEGQVLTIPQNYAVAIKSLDDNFSYVAFKTNDIPQIAALAGLTSSIRALPLDVVAHAFNLDRDQARQLKNNNPYKFLVPPPQSQLRAVA</sequence>
<name>CONA1_LUPAN</name>
<feature type="signal peptide" evidence="2">
    <location>
        <begin position="1"/>
        <end position="19"/>
    </location>
</feature>
<feature type="chain" id="PRO_5011015128" description="Conglutin alpha 1">
    <location>
        <begin position="20"/>
        <end position="506"/>
    </location>
</feature>
<feature type="chain" id="PRO_0000446133" description="Conglutin alpha 1A subunit" evidence="1">
    <location>
        <begin position="20"/>
        <end position="321"/>
    </location>
</feature>
<feature type="chain" id="PRO_0000446134" description="Conglutin alpha 1B subunit" evidence="1">
    <location>
        <begin position="322"/>
        <end position="506"/>
    </location>
</feature>
<feature type="domain" description="Cupin type-1 1" evidence="2">
    <location>
        <begin position="36"/>
        <end position="235"/>
    </location>
</feature>
<feature type="domain" description="Cupin type-1 2" evidence="2">
    <location>
        <begin position="334"/>
        <end position="483"/>
    </location>
</feature>
<feature type="region of interest" description="Disordered" evidence="4">
    <location>
        <begin position="111"/>
        <end position="131"/>
    </location>
</feature>
<feature type="region of interest" description="Disordered" evidence="4">
    <location>
        <begin position="195"/>
        <end position="216"/>
    </location>
</feature>
<feature type="region of interest" description="Disordered" evidence="4">
    <location>
        <begin position="251"/>
        <end position="322"/>
    </location>
</feature>
<feature type="compositionally biased region" description="Low complexity" evidence="4">
    <location>
        <begin position="195"/>
        <end position="207"/>
    </location>
</feature>
<feature type="compositionally biased region" description="Acidic residues" evidence="4">
    <location>
        <begin position="270"/>
        <end position="280"/>
    </location>
</feature>
<feature type="compositionally biased region" description="Basic residues" evidence="4">
    <location>
        <begin position="306"/>
        <end position="315"/>
    </location>
</feature>
<feature type="glycosylation site" description="N-linked (GlcNAc...) asparagine" evidence="3">
    <location>
        <position position="397"/>
    </location>
</feature>
<feature type="glycosylation site" description="N-linked (GlcNAc...) asparagine" evidence="3">
    <location>
        <position position="439"/>
    </location>
</feature>
<feature type="disulfide bond" evidence="1">
    <location>
        <begin position="31"/>
        <end position="64"/>
    </location>
</feature>
<feature type="disulfide bond" description="Interchain (between A and B chains)" evidence="1">
    <location>
        <begin position="107"/>
        <end position="328"/>
    </location>
</feature>
<feature type="sequence conflict" description="In Ref. 3; AAC49787." evidence="9" ref="3">
    <location>
        <position position="273"/>
    </location>
</feature>
<feature type="sequence conflict" description="In Ref. 3; AAC49787." evidence="9" ref="3">
    <original>RE</original>
    <variation>LS</variation>
    <location>
        <begin position="317"/>
        <end position="318"/>
    </location>
</feature>
<feature type="sequence conflict" description="In Ref. 3; AAC49787." evidence="9" ref="3">
    <original>VNAN</original>
    <variation>GNAK</variation>
    <location>
        <begin position="387"/>
        <end position="390"/>
    </location>
</feature>
<comment type="function">
    <text evidence="5">Sulfur-rich seed storage protein. This protein found in the seeds of many leguminous and non-leguminous plants is the source of sulfur-containing amino acids in seed meals.</text>
</comment>
<comment type="subunit">
    <text evidence="1 11">Hexamer; each subunit is composed of an acidic and a basic chain derived from a single precursor and linked by a disulfide bond (By similarity). Component of globulins complexes which accumulate in seeds (Probable).</text>
</comment>
<comment type="tissue specificity">
    <text evidence="6">Expressed in developing cotyledons and in the embryonic axis of germinating seeds.</text>
</comment>
<comment type="developmental stage">
    <text evidence="5 6">Accumulates during seed development.</text>
</comment>
<comment type="allergen">
    <text evidence="10">Causes an allergic reaction in human.</text>
</comment>
<comment type="similarity">
    <text evidence="9">Belongs to the 11S seed storage protein (globulins) family.</text>
</comment>
<proteinExistence type="evidence at protein level"/>
<protein>
    <recommendedName>
        <fullName evidence="7">Conglutin alpha 1</fullName>
    </recommendedName>
    <allergenName evidence="9">Lup an alpha-conglutin</allergenName>
    <component>
        <recommendedName>
            <fullName evidence="1">Conglutin alpha 1A subunit</fullName>
        </recommendedName>
    </component>
    <component>
        <recommendedName>
            <fullName evidence="1">Conglutin alpha 1B subunit</fullName>
        </recommendedName>
    </component>
</protein>
<gene>
    <name evidence="8" type="primary">CONALPHA</name>
    <name evidence="12" type="ORF">TanjilG_28353</name>
</gene>
<dbReference type="EMBL" id="HQ670406">
    <property type="protein sequence ID" value="AEB33709.1"/>
    <property type="molecule type" value="mRNA"/>
</dbReference>
<dbReference type="EMBL" id="CM007365">
    <property type="protein sequence ID" value="OIW11262.1"/>
    <property type="molecule type" value="Genomic_DNA"/>
</dbReference>
<dbReference type="EMBL" id="U74384">
    <property type="protein sequence ID" value="AAC49787.1"/>
    <property type="molecule type" value="mRNA"/>
</dbReference>
<dbReference type="SMR" id="F5B8V6"/>
<dbReference type="STRING" id="3871.F5B8V6"/>
<dbReference type="Allergome" id="7697">
    <property type="allergen name" value="Lup an alpha_Conglutin"/>
</dbReference>
<dbReference type="GlyCosmos" id="F5B8V6">
    <property type="glycosylation" value="2 sites, No reported glycans"/>
</dbReference>
<dbReference type="EnsemblPlants" id="OIW11262">
    <property type="protein sequence ID" value="OIW11262"/>
    <property type="gene ID" value="TanjilG_28353"/>
</dbReference>
<dbReference type="Gramene" id="OIW11262">
    <property type="protein sequence ID" value="OIW11262"/>
    <property type="gene ID" value="TanjilG_28353"/>
</dbReference>
<dbReference type="Proteomes" id="UP000188354">
    <property type="component" value="Chromosome LG05"/>
</dbReference>
<dbReference type="GO" id="GO:0045735">
    <property type="term" value="F:nutrient reservoir activity"/>
    <property type="evidence" value="ECO:0007669"/>
    <property type="project" value="UniProtKB-KW"/>
</dbReference>
<dbReference type="CDD" id="cd02243">
    <property type="entry name" value="cupin_11S_legumin_C"/>
    <property type="match status" value="1"/>
</dbReference>
<dbReference type="CDD" id="cd02242">
    <property type="entry name" value="cupin_11S_legumin_N"/>
    <property type="match status" value="1"/>
</dbReference>
<dbReference type="FunFam" id="2.60.120.10:FF:000073">
    <property type="entry name" value="Glycinin G1"/>
    <property type="match status" value="1"/>
</dbReference>
<dbReference type="Gene3D" id="2.60.120.10">
    <property type="entry name" value="Jelly Rolls"/>
    <property type="match status" value="3"/>
</dbReference>
<dbReference type="InterPro" id="IPR022379">
    <property type="entry name" value="11S_seedstore_CS"/>
</dbReference>
<dbReference type="InterPro" id="IPR006044">
    <property type="entry name" value="11S_seedstore_pln"/>
</dbReference>
<dbReference type="InterPro" id="IPR006045">
    <property type="entry name" value="Cupin_1"/>
</dbReference>
<dbReference type="InterPro" id="IPR014710">
    <property type="entry name" value="RmlC-like_jellyroll"/>
</dbReference>
<dbReference type="InterPro" id="IPR011051">
    <property type="entry name" value="RmlC_Cupin_sf"/>
</dbReference>
<dbReference type="InterPro" id="IPR050253">
    <property type="entry name" value="Seed_Storage-Functional"/>
</dbReference>
<dbReference type="PANTHER" id="PTHR31189:SF77">
    <property type="entry name" value="GLYCININ G3"/>
    <property type="match status" value="1"/>
</dbReference>
<dbReference type="PANTHER" id="PTHR31189">
    <property type="entry name" value="OS03G0336100 PROTEIN-RELATED"/>
    <property type="match status" value="1"/>
</dbReference>
<dbReference type="Pfam" id="PF00190">
    <property type="entry name" value="Cupin_1"/>
    <property type="match status" value="2"/>
</dbReference>
<dbReference type="PRINTS" id="PR00439">
    <property type="entry name" value="11SGLOBULIN"/>
</dbReference>
<dbReference type="SMART" id="SM00835">
    <property type="entry name" value="Cupin_1"/>
    <property type="match status" value="2"/>
</dbReference>
<dbReference type="SUPFAM" id="SSF51182">
    <property type="entry name" value="RmlC-like cupins"/>
    <property type="match status" value="1"/>
</dbReference>
<dbReference type="PROSITE" id="PS00305">
    <property type="entry name" value="11S_SEED_STORAGE"/>
    <property type="match status" value="1"/>
</dbReference>
<accession>F5B8V6</accession>
<accession>Q96475</accession>
<keyword id="KW-0020">Allergen</keyword>
<keyword id="KW-1015">Disulfide bond</keyword>
<keyword id="KW-0325">Glycoprotein</keyword>
<keyword id="KW-1185">Reference proteome</keyword>
<keyword id="KW-0708">Seed storage protein</keyword>
<keyword id="KW-0732">Signal</keyword>
<keyword id="KW-0758">Storage protein</keyword>
<reference key="1">
    <citation type="journal article" date="2011" name="BMC Plant Biol.">
        <title>Identification and characterisation of seed storage protein transcripts from Lupinus angustifolius.</title>
        <authorList>
            <person name="Foley R.C."/>
            <person name="Gao L.-L."/>
            <person name="Spriggs A."/>
            <person name="Soo L.Y.C."/>
            <person name="Goggin D.E."/>
            <person name="Smith P.M.C."/>
            <person name="Atkins C.A."/>
            <person name="Singh K.B."/>
        </authorList>
    </citation>
    <scope>NUCLEOTIDE SEQUENCE [MRNA]</scope>
    <scope>FUNCTION</scope>
    <scope>DEVELOPMENTAL STAGE</scope>
    <scope>ALLERGEN</scope>
    <source>
        <strain>cv. Tanjil</strain>
        <tissue>Seed</tissue>
    </source>
</reference>
<reference key="2">
    <citation type="journal article" date="2017" name="Plant Biotechnol. J.">
        <title>A comprehensive draft genome sequence for lupin (Lupinus angustifolius), an emerging health food: insights into plant-microbe interactions and legume evolution.</title>
        <authorList>
            <person name="Hane J.K."/>
            <person name="Ming Y."/>
            <person name="Kamphuis L.G."/>
            <person name="Nelson M.N."/>
            <person name="Garg G."/>
            <person name="Atkins C.A."/>
            <person name="Bayer P.E."/>
            <person name="Bravo A."/>
            <person name="Bringans S."/>
            <person name="Cannon S."/>
            <person name="Edwards D."/>
            <person name="Foley R."/>
            <person name="Gao L.L."/>
            <person name="Harrison M.J."/>
            <person name="Huang W."/>
            <person name="Hurgobin B."/>
            <person name="Li S."/>
            <person name="Liu C.W."/>
            <person name="McGrath A."/>
            <person name="Morahan G."/>
            <person name="Murray J."/>
            <person name="Weller J."/>
            <person name="Jian J."/>
            <person name="Singh K.B."/>
        </authorList>
    </citation>
    <scope>NUCLEOTIDE SEQUENCE [LARGE SCALE GENOMIC DNA]</scope>
    <source>
        <strain>cv. Tanjil</strain>
        <tissue>Seedling</tissue>
    </source>
</reference>
<reference key="3">
    <citation type="journal article" date="1997" name="Plant Mol. Biol.">
        <title>Transcription of genes for conglutin gamma and a leginsulin-like protein in narrow-leafed lupin.</title>
        <authorList>
            <person name="Ilgoutz S.C."/>
            <person name="Knittel N."/>
            <person name="Lin J.M."/>
            <person name="Sterle S."/>
            <person name="Gayler K.R."/>
        </authorList>
    </citation>
    <scope>NUCLEOTIDE SEQUENCE [MRNA] OF 267-397</scope>
    <scope>TISSUE SPECIFICITY</scope>
    <scope>DEVELOPMENTAL STAGE</scope>
    <source>
        <strain>cv. Unicrop</strain>
    </source>
</reference>
<reference key="4">
    <citation type="journal article" date="2012" name="J. Agric. Food Chem.">
        <title>Release of flavonoids from lupin globulin proteins during digestion in a model system.</title>
        <authorList>
            <person name="Czubinski J."/>
            <person name="Dwiecki K."/>
            <person name="Siger A."/>
            <person name="Kachlicki P."/>
            <person name="Neunert G."/>
            <person name="Lampart-Szczapa E."/>
            <person name="Nogala-Kalucka M."/>
        </authorList>
    </citation>
    <scope>SUBUNIT</scope>
    <source>
        <strain>cv. Zeus</strain>
    </source>
</reference>